<protein>
    <recommendedName>
        <fullName evidence="1">Potassium-transporting ATPase potassium-binding subunit</fullName>
    </recommendedName>
    <alternativeName>
        <fullName evidence="1">ATP phosphohydrolase [potassium-transporting] A chain</fullName>
    </alternativeName>
    <alternativeName>
        <fullName evidence="1">Potassium-binding and translocating subunit A</fullName>
    </alternativeName>
    <alternativeName>
        <fullName evidence="1">Potassium-translocating ATPase A chain</fullName>
    </alternativeName>
</protein>
<organism>
    <name type="scientific">Cronobacter sakazakii (strain ATCC BAA-894)</name>
    <name type="common">Enterobacter sakazakii</name>
    <dbReference type="NCBI Taxonomy" id="290339"/>
    <lineage>
        <taxon>Bacteria</taxon>
        <taxon>Pseudomonadati</taxon>
        <taxon>Pseudomonadota</taxon>
        <taxon>Gammaproteobacteria</taxon>
        <taxon>Enterobacterales</taxon>
        <taxon>Enterobacteriaceae</taxon>
        <taxon>Cronobacter</taxon>
    </lineage>
</organism>
<keyword id="KW-0997">Cell inner membrane</keyword>
<keyword id="KW-1003">Cell membrane</keyword>
<keyword id="KW-0406">Ion transport</keyword>
<keyword id="KW-0472">Membrane</keyword>
<keyword id="KW-0630">Potassium</keyword>
<keyword id="KW-0633">Potassium transport</keyword>
<keyword id="KW-1185">Reference proteome</keyword>
<keyword id="KW-0812">Transmembrane</keyword>
<keyword id="KW-1133">Transmembrane helix</keyword>
<keyword id="KW-0813">Transport</keyword>
<dbReference type="EMBL" id="CP000783">
    <property type="protein sequence ID" value="ABU77881.1"/>
    <property type="molecule type" value="Genomic_DNA"/>
</dbReference>
<dbReference type="RefSeq" id="WP_012125348.1">
    <property type="nucleotide sequence ID" value="NC_009778.1"/>
</dbReference>
<dbReference type="SMR" id="A7MQU8"/>
<dbReference type="KEGG" id="esa:ESA_02641"/>
<dbReference type="PATRIC" id="fig|290339.8.peg.2351"/>
<dbReference type="HOGENOM" id="CLU_018614_3_0_6"/>
<dbReference type="Proteomes" id="UP000000260">
    <property type="component" value="Chromosome"/>
</dbReference>
<dbReference type="GO" id="GO:0005886">
    <property type="term" value="C:plasma membrane"/>
    <property type="evidence" value="ECO:0007669"/>
    <property type="project" value="UniProtKB-SubCell"/>
</dbReference>
<dbReference type="GO" id="GO:0008556">
    <property type="term" value="F:P-type potassium transmembrane transporter activity"/>
    <property type="evidence" value="ECO:0007669"/>
    <property type="project" value="InterPro"/>
</dbReference>
<dbReference type="GO" id="GO:0030955">
    <property type="term" value="F:potassium ion binding"/>
    <property type="evidence" value="ECO:0007669"/>
    <property type="project" value="UniProtKB-UniRule"/>
</dbReference>
<dbReference type="HAMAP" id="MF_00275">
    <property type="entry name" value="KdpA"/>
    <property type="match status" value="1"/>
</dbReference>
<dbReference type="InterPro" id="IPR004623">
    <property type="entry name" value="KdpA"/>
</dbReference>
<dbReference type="NCBIfam" id="TIGR00680">
    <property type="entry name" value="kdpA"/>
    <property type="match status" value="1"/>
</dbReference>
<dbReference type="PANTHER" id="PTHR30607">
    <property type="entry name" value="POTASSIUM-TRANSPORTING ATPASE A CHAIN"/>
    <property type="match status" value="1"/>
</dbReference>
<dbReference type="PANTHER" id="PTHR30607:SF2">
    <property type="entry name" value="POTASSIUM-TRANSPORTING ATPASE POTASSIUM-BINDING SUBUNIT"/>
    <property type="match status" value="1"/>
</dbReference>
<dbReference type="Pfam" id="PF03814">
    <property type="entry name" value="KdpA"/>
    <property type="match status" value="1"/>
</dbReference>
<dbReference type="PIRSF" id="PIRSF001294">
    <property type="entry name" value="K_ATPaseA"/>
    <property type="match status" value="1"/>
</dbReference>
<sequence>MAASAFLLIASFLLVLMALAKPLGSLLARLINGEALPGVGGVERALWAVLGIRQEEMDWKRYLLAILLFNTLGLVLLFAILMCQGVLPLNPQNLPGLSWHLALNTAVSFVANTNWQSYAGESTVSYFSQMAGLAVQNFLSAATGIAVAFALIRAFARQSATTLGNAWQDLTRVTLWVLMPISLIIALFFIQQGAIQNFSAYQPFTTLEGARQMLPMGPVASQEAIKMLGTNGGGFFNANSSHPFENPTALTNVVQMLAIFLIPAALCFAFGDAVGDARQGRAILWTMTVIFVVCVALVMWAETTGNPHFLTLGADSAANMEGKESRFGILASSLFAVVTTAASCGAVNAMHDTFTALGGMIPMWLMQIGEVVFGGVGSGLYGMLLFVLLGVFIAGLMIGRTPEYLGKKIDVREMKMTALAILVTPALVLLGTALAMMTDAGRAGMFNPGIHGFSEVLYAVSSAANNNGSAFGGLSANTPFWNLLLAFCMWFGRFLVIIPVMAIAGSLAAKKAQPASPGTLPTHGALFIGLLTGTVLLVGALTFIPALALGPVAEHLSLVK</sequence>
<reference key="1">
    <citation type="journal article" date="2010" name="PLoS ONE">
        <title>Genome sequence of Cronobacter sakazakii BAA-894 and comparative genomic hybridization analysis with other Cronobacter species.</title>
        <authorList>
            <person name="Kucerova E."/>
            <person name="Clifton S.W."/>
            <person name="Xia X.Q."/>
            <person name="Long F."/>
            <person name="Porwollik S."/>
            <person name="Fulton L."/>
            <person name="Fronick C."/>
            <person name="Minx P."/>
            <person name="Kyung K."/>
            <person name="Warren W."/>
            <person name="Fulton R."/>
            <person name="Feng D."/>
            <person name="Wollam A."/>
            <person name="Shah N."/>
            <person name="Bhonagiri V."/>
            <person name="Nash W.E."/>
            <person name="Hallsworth-Pepin K."/>
            <person name="Wilson R.K."/>
            <person name="McClelland M."/>
            <person name="Forsythe S.J."/>
        </authorList>
    </citation>
    <scope>NUCLEOTIDE SEQUENCE [LARGE SCALE GENOMIC DNA]</scope>
    <source>
        <strain>ATCC BAA-894</strain>
    </source>
</reference>
<accession>A7MQU8</accession>
<name>KDPA_CROS8</name>
<gene>
    <name evidence="1" type="primary">kdpA</name>
    <name type="ordered locus">ESA_02641</name>
</gene>
<proteinExistence type="inferred from homology"/>
<feature type="chain" id="PRO_1000022222" description="Potassium-transporting ATPase potassium-binding subunit">
    <location>
        <begin position="1"/>
        <end position="560"/>
    </location>
</feature>
<feature type="transmembrane region" description="Helical" evidence="1">
    <location>
        <begin position="6"/>
        <end position="26"/>
    </location>
</feature>
<feature type="transmembrane region" description="Helical" evidence="1">
    <location>
        <begin position="63"/>
        <end position="83"/>
    </location>
</feature>
<feature type="transmembrane region" description="Helical" evidence="1">
    <location>
        <begin position="132"/>
        <end position="152"/>
    </location>
</feature>
<feature type="transmembrane region" description="Helical" evidence="1">
    <location>
        <begin position="175"/>
        <end position="195"/>
    </location>
</feature>
<feature type="transmembrane region" description="Helical" evidence="1">
    <location>
        <begin position="250"/>
        <end position="270"/>
    </location>
</feature>
<feature type="transmembrane region" description="Helical" evidence="1">
    <location>
        <begin position="282"/>
        <end position="302"/>
    </location>
</feature>
<feature type="transmembrane region" description="Helical" evidence="1">
    <location>
        <begin position="327"/>
        <end position="347"/>
    </location>
</feature>
<feature type="transmembrane region" description="Helical" evidence="1">
    <location>
        <begin position="356"/>
        <end position="376"/>
    </location>
</feature>
<feature type="transmembrane region" description="Helical" evidence="1">
    <location>
        <begin position="379"/>
        <end position="399"/>
    </location>
</feature>
<feature type="transmembrane region" description="Helical" evidence="1">
    <location>
        <begin position="416"/>
        <end position="436"/>
    </location>
</feature>
<feature type="transmembrane region" description="Helical" evidence="1">
    <location>
        <begin position="483"/>
        <end position="503"/>
    </location>
</feature>
<feature type="transmembrane region" description="Helical" evidence="1">
    <location>
        <begin position="524"/>
        <end position="544"/>
    </location>
</feature>
<comment type="function">
    <text evidence="1">Part of the high-affinity ATP-driven potassium transport (or Kdp) system, which catalyzes the hydrolysis of ATP coupled with the electrogenic transport of potassium into the cytoplasm. This subunit binds the periplasmic potassium ions and delivers the ions to the membrane domain of KdpB through an intramembrane tunnel.</text>
</comment>
<comment type="subunit">
    <text evidence="1">The system is composed of three essential subunits: KdpA, KdpB and KdpC.</text>
</comment>
<comment type="subcellular location">
    <subcellularLocation>
        <location evidence="1">Cell inner membrane</location>
        <topology evidence="1">Multi-pass membrane protein</topology>
    </subcellularLocation>
</comment>
<comment type="similarity">
    <text evidence="1">Belongs to the KdpA family.</text>
</comment>
<evidence type="ECO:0000255" key="1">
    <source>
        <dbReference type="HAMAP-Rule" id="MF_00275"/>
    </source>
</evidence>